<feature type="chain" id="PRO_0000322135" description="Probable ubiquitin conjugation factor E4">
    <location>
        <begin position="1"/>
        <end position="1038"/>
    </location>
</feature>
<feature type="domain" description="U-box">
    <location>
        <begin position="940"/>
        <end position="1014"/>
    </location>
</feature>
<feature type="region of interest" description="Disordered" evidence="3">
    <location>
        <begin position="430"/>
        <end position="459"/>
    </location>
</feature>
<feature type="region of interest" description="Disordered" evidence="3">
    <location>
        <begin position="1010"/>
        <end position="1038"/>
    </location>
</feature>
<feature type="compositionally biased region" description="Low complexity" evidence="3">
    <location>
        <begin position="446"/>
        <end position="459"/>
    </location>
</feature>
<feature type="compositionally biased region" description="Basic and acidic residues" evidence="3">
    <location>
        <begin position="1017"/>
        <end position="1028"/>
    </location>
</feature>
<feature type="compositionally biased region" description="Polar residues" evidence="3">
    <location>
        <begin position="1029"/>
        <end position="1038"/>
    </location>
</feature>
<keyword id="KW-0963">Cytoplasm</keyword>
<keyword id="KW-0539">Nucleus</keyword>
<keyword id="KW-1185">Reference proteome</keyword>
<keyword id="KW-0808">Transferase</keyword>
<keyword id="KW-0833">Ubl conjugation pathway</keyword>
<organism>
    <name type="scientific">Arabidopsis thaliana</name>
    <name type="common">Mouse-ear cress</name>
    <dbReference type="NCBI Taxonomy" id="3702"/>
    <lineage>
        <taxon>Eukaryota</taxon>
        <taxon>Viridiplantae</taxon>
        <taxon>Streptophyta</taxon>
        <taxon>Embryophyta</taxon>
        <taxon>Tracheophyta</taxon>
        <taxon>Spermatophyta</taxon>
        <taxon>Magnoliopsida</taxon>
        <taxon>eudicotyledons</taxon>
        <taxon>Gunneridae</taxon>
        <taxon>Pentapetalae</taxon>
        <taxon>rosids</taxon>
        <taxon>malvids</taxon>
        <taxon>Brassicales</taxon>
        <taxon>Brassicaceae</taxon>
        <taxon>Camelineae</taxon>
        <taxon>Arabidopsis</taxon>
    </lineage>
</organism>
<gene>
    <name type="primary">PUB1</name>
    <name type="synonym">UFD2</name>
    <name type="ordered locus">At5g15400</name>
    <name type="ORF">T20K14_10</name>
</gene>
<evidence type="ECO:0000250" key="1">
    <source>
        <dbReference type="UniProtKB" id="P54860"/>
    </source>
</evidence>
<evidence type="ECO:0000250" key="2">
    <source>
        <dbReference type="UniProtKB" id="Q9ES00"/>
    </source>
</evidence>
<evidence type="ECO:0000256" key="3">
    <source>
        <dbReference type="SAM" id="MobiDB-lite"/>
    </source>
</evidence>
<evidence type="ECO:0000305" key="4"/>
<accession>Q9LF41</accession>
<dbReference type="EC" id="2.3.2.27" evidence="1 2"/>
<dbReference type="EMBL" id="AL391143">
    <property type="protein sequence ID" value="CAC01739.1"/>
    <property type="molecule type" value="Genomic_DNA"/>
</dbReference>
<dbReference type="EMBL" id="CP002688">
    <property type="protein sequence ID" value="AED92156.1"/>
    <property type="molecule type" value="Genomic_DNA"/>
</dbReference>
<dbReference type="EMBL" id="BX832575">
    <property type="status" value="NOT_ANNOTATED_CDS"/>
    <property type="molecule type" value="mRNA"/>
</dbReference>
<dbReference type="PIR" id="T51518">
    <property type="entry name" value="T51518"/>
</dbReference>
<dbReference type="RefSeq" id="NP_568313.2">
    <property type="nucleotide sequence ID" value="NM_121544.4"/>
</dbReference>
<dbReference type="SMR" id="Q9LF41"/>
<dbReference type="BioGRID" id="16668">
    <property type="interactions" value="10"/>
</dbReference>
<dbReference type="FunCoup" id="Q9LF41">
    <property type="interactions" value="5011"/>
</dbReference>
<dbReference type="IntAct" id="Q9LF41">
    <property type="interactions" value="1"/>
</dbReference>
<dbReference type="STRING" id="3702.Q9LF41"/>
<dbReference type="TCDB" id="3.A.16.1.5">
    <property type="family name" value="the endoplasmic reticular retrotranslocon (er-rt) family"/>
</dbReference>
<dbReference type="PaxDb" id="3702-AT5G15400.1"/>
<dbReference type="ProteomicsDB" id="228601"/>
<dbReference type="EnsemblPlants" id="AT5G15400.1">
    <property type="protein sequence ID" value="AT5G15400.1"/>
    <property type="gene ID" value="AT5G15400"/>
</dbReference>
<dbReference type="GeneID" id="831392"/>
<dbReference type="Gramene" id="AT5G15400.1">
    <property type="protein sequence ID" value="AT5G15400.1"/>
    <property type="gene ID" value="AT5G15400"/>
</dbReference>
<dbReference type="KEGG" id="ath:AT5G15400"/>
<dbReference type="Araport" id="AT5G15400"/>
<dbReference type="TAIR" id="AT5G15400">
    <property type="gene designation" value="MUSE3"/>
</dbReference>
<dbReference type="eggNOG" id="KOG2042">
    <property type="taxonomic scope" value="Eukaryota"/>
</dbReference>
<dbReference type="HOGENOM" id="CLU_003224_2_1_1"/>
<dbReference type="InParanoid" id="Q9LF41"/>
<dbReference type="OMA" id="WLTEIAM"/>
<dbReference type="PhylomeDB" id="Q9LF41"/>
<dbReference type="UniPathway" id="UPA00143"/>
<dbReference type="PRO" id="PR:Q9LF41"/>
<dbReference type="Proteomes" id="UP000006548">
    <property type="component" value="Chromosome 5"/>
</dbReference>
<dbReference type="ExpressionAtlas" id="Q9LF41">
    <property type="expression patterns" value="baseline and differential"/>
</dbReference>
<dbReference type="GO" id="GO:0005737">
    <property type="term" value="C:cytoplasm"/>
    <property type="evidence" value="ECO:0000314"/>
    <property type="project" value="TAIR"/>
</dbReference>
<dbReference type="GO" id="GO:0005634">
    <property type="term" value="C:nucleus"/>
    <property type="evidence" value="ECO:0000314"/>
    <property type="project" value="TAIR"/>
</dbReference>
<dbReference type="GO" id="GO:0000151">
    <property type="term" value="C:ubiquitin ligase complex"/>
    <property type="evidence" value="ECO:0007669"/>
    <property type="project" value="InterPro"/>
</dbReference>
<dbReference type="GO" id="GO:0061630">
    <property type="term" value="F:ubiquitin protein ligase activity"/>
    <property type="evidence" value="ECO:0000316"/>
    <property type="project" value="TAIR"/>
</dbReference>
<dbReference type="GO" id="GO:0034450">
    <property type="term" value="F:ubiquitin-ubiquitin ligase activity"/>
    <property type="evidence" value="ECO:0007669"/>
    <property type="project" value="InterPro"/>
</dbReference>
<dbReference type="GO" id="GO:0036503">
    <property type="term" value="P:ERAD pathway"/>
    <property type="evidence" value="ECO:0007669"/>
    <property type="project" value="InterPro"/>
</dbReference>
<dbReference type="GO" id="GO:0016567">
    <property type="term" value="P:protein ubiquitination"/>
    <property type="evidence" value="ECO:0000316"/>
    <property type="project" value="TAIR"/>
</dbReference>
<dbReference type="GO" id="GO:0006511">
    <property type="term" value="P:ubiquitin-dependent protein catabolic process"/>
    <property type="evidence" value="ECO:0000316"/>
    <property type="project" value="TAIR"/>
</dbReference>
<dbReference type="CDD" id="cd16657">
    <property type="entry name" value="RING-Ubox_UBE4A"/>
    <property type="match status" value="1"/>
</dbReference>
<dbReference type="FunFam" id="3.30.40.10:FF:000055">
    <property type="entry name" value="Ubiquitin conjugation factor e4 a"/>
    <property type="match status" value="1"/>
</dbReference>
<dbReference type="Gene3D" id="3.30.40.10">
    <property type="entry name" value="Zinc/RING finger domain, C3HC4 (zinc finger)"/>
    <property type="match status" value="1"/>
</dbReference>
<dbReference type="InterPro" id="IPR019474">
    <property type="entry name" value="Ub_conjug_fac_E4_core"/>
</dbReference>
<dbReference type="InterPro" id="IPR045132">
    <property type="entry name" value="UBE4"/>
</dbReference>
<dbReference type="InterPro" id="IPR003613">
    <property type="entry name" value="Ubox_domain"/>
</dbReference>
<dbReference type="InterPro" id="IPR013083">
    <property type="entry name" value="Znf_RING/FYVE/PHD"/>
</dbReference>
<dbReference type="PANTHER" id="PTHR13931:SF2">
    <property type="entry name" value="UBIQUITIN CONJUGATION FACTOR E4 B"/>
    <property type="match status" value="1"/>
</dbReference>
<dbReference type="PANTHER" id="PTHR13931">
    <property type="entry name" value="UBIQUITINATION FACTOR E4"/>
    <property type="match status" value="1"/>
</dbReference>
<dbReference type="Pfam" id="PF04564">
    <property type="entry name" value="U-box"/>
    <property type="match status" value="1"/>
</dbReference>
<dbReference type="Pfam" id="PF10408">
    <property type="entry name" value="Ufd2P_core"/>
    <property type="match status" value="1"/>
</dbReference>
<dbReference type="SMART" id="SM00504">
    <property type="entry name" value="Ubox"/>
    <property type="match status" value="1"/>
</dbReference>
<dbReference type="SUPFAM" id="SSF57850">
    <property type="entry name" value="RING/U-box"/>
    <property type="match status" value="1"/>
</dbReference>
<dbReference type="PROSITE" id="PS51698">
    <property type="entry name" value="U_BOX"/>
    <property type="match status" value="1"/>
</dbReference>
<protein>
    <recommendedName>
        <fullName>Probable ubiquitin conjugation factor E4</fullName>
        <ecNumber evidence="1 2">2.3.2.27</ecNumber>
    </recommendedName>
    <alternativeName>
        <fullName>Plant U-box protein 1</fullName>
    </alternativeName>
    <alternativeName>
        <fullName>RING-type E3 ubiquitin transferase E4</fullName>
    </alternativeName>
    <alternativeName>
        <fullName>U-box domain-containing protein 1</fullName>
    </alternativeName>
    <alternativeName>
        <fullName>Ubiquitin-fusion degradation protein 2-like</fullName>
        <shortName>UB fusion protein 2-like</shortName>
    </alternativeName>
</protein>
<sequence length="1038" mass="117528">MATSKPQRSPAEIEDIILRKIFYVTLTESTDSDPRIVYLEMTAAEILSEGKELLLSRDLMERVLIDRLSGDFSDAEPPFPYLIGCHRRAYDESKKIQSMKDKNLRSEMEIVTKQAKKLAVSYCRIHLGNPDMFGNSDKPSGGLDNRLKKRNVSPVLPLIFAEVGSGSLDMFGASSSGVQAPPGFLDEFFKDSDFDSLDSILKELYEDLRSTVINVSVLGDFQPPLRALKYLVSLPVGAKSLVSHEWWVPRGAYMNGRAMELTSILGPFFHISALPDNTLFKSQPDVGQQCFSEASERRPADLLSSFSTIKNFMNILYSGLHDVLMILLKSTDTRERVLQFLAEVINANASRAHIQVDPVSCASSGMFVNLSAVMLRLCEPFLDPHLTKRDKIDPKYAFCGHRLKLSDLTALHASSEEVTEWIGKDAMANANDAGRENGNESRLLQSKEATSSSSNASGQNAKSATKYTFICECFFMTARVLNLGLLKALSDFKHLAQDISRGEDNLATLKAMRDQAPSPQLELDISRMEKELELSSQEKLCHEAQILRDGDFIQRALSFYRLMVVWLVGLVGGFKMPLPSTCPMEFSCMPEHFVEDAMELLIFASRIPKALDGVPLDDFMNFIIMFMASPEYVRNPYLRAKMVEVLNCWMPRSSSSSSATSTLFEGHQLSLEYLVRNLLKLYVDIEFTGSHTQFYDKFNIRHNIAELLEYLWQVPSHRNAWRRIAKDEEKGVYLNFLNFLVNDSIYLLDESLNKILEIKQIEADMSNTAEWEQRPTQERQERTRLFHSQENIVRIDMKLANEDVTMLAFTSEEITAPFLLPEMVERVANMLNYFLLQLVGPQRKSLSLKDPEKYEFRPKQLLKQIVRIYVNLARGDTVNIFPGAISSDGRSYNEQLFNAGADVLRRIGEEGRIIQEFMELGTKAKAAASEALDAEAALGEIPDEFLDPIQYTLMRDPVILPSSRITVDRPIIQRHLLSDNHDPFNRAHLTSDMLIPDIELKAKIDEFVKSHQSKKRTSGEDSSNKERIQTTNSDMLID</sequence>
<proteinExistence type="evidence at transcript level"/>
<name>UBE4_ARATH</name>
<reference key="1">
    <citation type="journal article" date="2000" name="Nature">
        <title>Sequence and analysis of chromosome 5 of the plant Arabidopsis thaliana.</title>
        <authorList>
            <person name="Tabata S."/>
            <person name="Kaneko T."/>
            <person name="Nakamura Y."/>
            <person name="Kotani H."/>
            <person name="Kato T."/>
            <person name="Asamizu E."/>
            <person name="Miyajima N."/>
            <person name="Sasamoto S."/>
            <person name="Kimura T."/>
            <person name="Hosouchi T."/>
            <person name="Kawashima K."/>
            <person name="Kohara M."/>
            <person name="Matsumoto M."/>
            <person name="Matsuno A."/>
            <person name="Muraki A."/>
            <person name="Nakayama S."/>
            <person name="Nakazaki N."/>
            <person name="Naruo K."/>
            <person name="Okumura S."/>
            <person name="Shinpo S."/>
            <person name="Takeuchi C."/>
            <person name="Wada T."/>
            <person name="Watanabe A."/>
            <person name="Yamada M."/>
            <person name="Yasuda M."/>
            <person name="Sato S."/>
            <person name="de la Bastide M."/>
            <person name="Huang E."/>
            <person name="Spiegel L."/>
            <person name="Gnoj L."/>
            <person name="O'Shaughnessy A."/>
            <person name="Preston R."/>
            <person name="Habermann K."/>
            <person name="Murray J."/>
            <person name="Johnson D."/>
            <person name="Rohlfing T."/>
            <person name="Nelson J."/>
            <person name="Stoneking T."/>
            <person name="Pepin K."/>
            <person name="Spieth J."/>
            <person name="Sekhon M."/>
            <person name="Armstrong J."/>
            <person name="Becker M."/>
            <person name="Belter E."/>
            <person name="Cordum H."/>
            <person name="Cordes M."/>
            <person name="Courtney L."/>
            <person name="Courtney W."/>
            <person name="Dante M."/>
            <person name="Du H."/>
            <person name="Edwards J."/>
            <person name="Fryman J."/>
            <person name="Haakensen B."/>
            <person name="Lamar E."/>
            <person name="Latreille P."/>
            <person name="Leonard S."/>
            <person name="Meyer R."/>
            <person name="Mulvaney E."/>
            <person name="Ozersky P."/>
            <person name="Riley A."/>
            <person name="Strowmatt C."/>
            <person name="Wagner-McPherson C."/>
            <person name="Wollam A."/>
            <person name="Yoakum M."/>
            <person name="Bell M."/>
            <person name="Dedhia N."/>
            <person name="Parnell L."/>
            <person name="Shah R."/>
            <person name="Rodriguez M."/>
            <person name="Hoon See L."/>
            <person name="Vil D."/>
            <person name="Baker J."/>
            <person name="Kirchoff K."/>
            <person name="Toth K."/>
            <person name="King L."/>
            <person name="Bahret A."/>
            <person name="Miller B."/>
            <person name="Marra M.A."/>
            <person name="Martienssen R."/>
            <person name="McCombie W.R."/>
            <person name="Wilson R.K."/>
            <person name="Murphy G."/>
            <person name="Bancroft I."/>
            <person name="Volckaert G."/>
            <person name="Wambutt R."/>
            <person name="Duesterhoeft A."/>
            <person name="Stiekema W."/>
            <person name="Pohl T."/>
            <person name="Entian K.-D."/>
            <person name="Terryn N."/>
            <person name="Hartley N."/>
            <person name="Bent E."/>
            <person name="Johnson S."/>
            <person name="Langham S.-A."/>
            <person name="McCullagh B."/>
            <person name="Robben J."/>
            <person name="Grymonprez B."/>
            <person name="Zimmermann W."/>
            <person name="Ramsperger U."/>
            <person name="Wedler H."/>
            <person name="Balke K."/>
            <person name="Wedler E."/>
            <person name="Peters S."/>
            <person name="van Staveren M."/>
            <person name="Dirkse W."/>
            <person name="Mooijman P."/>
            <person name="Klein Lankhorst R."/>
            <person name="Weitzenegger T."/>
            <person name="Bothe G."/>
            <person name="Rose M."/>
            <person name="Hauf J."/>
            <person name="Berneiser S."/>
            <person name="Hempel S."/>
            <person name="Feldpausch M."/>
            <person name="Lamberth S."/>
            <person name="Villarroel R."/>
            <person name="Gielen J."/>
            <person name="Ardiles W."/>
            <person name="Bents O."/>
            <person name="Lemcke K."/>
            <person name="Kolesov G."/>
            <person name="Mayer K.F.X."/>
            <person name="Rudd S."/>
            <person name="Schoof H."/>
            <person name="Schueller C."/>
            <person name="Zaccaria P."/>
            <person name="Mewes H.-W."/>
            <person name="Bevan M."/>
            <person name="Fransz P.F."/>
        </authorList>
    </citation>
    <scope>NUCLEOTIDE SEQUENCE [LARGE SCALE GENOMIC DNA]</scope>
    <source>
        <strain>cv. Columbia</strain>
    </source>
</reference>
<reference key="2">
    <citation type="journal article" date="2017" name="Plant J.">
        <title>Araport11: a complete reannotation of the Arabidopsis thaliana reference genome.</title>
        <authorList>
            <person name="Cheng C.Y."/>
            <person name="Krishnakumar V."/>
            <person name="Chan A.P."/>
            <person name="Thibaud-Nissen F."/>
            <person name="Schobel S."/>
            <person name="Town C.D."/>
        </authorList>
    </citation>
    <scope>GENOME REANNOTATION</scope>
    <source>
        <strain>cv. Columbia</strain>
    </source>
</reference>
<reference key="3">
    <citation type="journal article" date="2004" name="Genome Res.">
        <title>Whole genome sequence comparisons and 'full-length' cDNA sequences: a combined approach to evaluate and improve Arabidopsis genome annotation.</title>
        <authorList>
            <person name="Castelli V."/>
            <person name="Aury J.-M."/>
            <person name="Jaillon O."/>
            <person name="Wincker P."/>
            <person name="Clepet C."/>
            <person name="Menard M."/>
            <person name="Cruaud C."/>
            <person name="Quetier F."/>
            <person name="Scarpelli C."/>
            <person name="Schaechter V."/>
            <person name="Temple G."/>
            <person name="Caboche M."/>
            <person name="Weissenbach J."/>
            <person name="Salanoubat M."/>
        </authorList>
    </citation>
    <scope>NUCLEOTIDE SEQUENCE [LARGE SCALE MRNA]</scope>
    <source>
        <strain>cv. Columbia</strain>
    </source>
</reference>
<reference key="4">
    <citation type="journal article" date="2001" name="Trends Plant Sci.">
        <title>The U-box protein family in plants.</title>
        <authorList>
            <person name="Azevedo C."/>
            <person name="Santos-Rosa M.J."/>
            <person name="Shirasu K."/>
        </authorList>
    </citation>
    <scope>GENE FAMILY ORGANIZATION</scope>
    <scope>NOMENCLATURE</scope>
</reference>
<comment type="function">
    <text evidence="1 2">Ubiquitin-protein ligase that may function as an E3 ligase in conjunction with specific E1 and E2 ligases. May also function as an E4 ligase mediating the assembly of polyubiquitin chain assembly on substrates monoubiquitinated by another E3 ubiquitin ligase.</text>
</comment>
<comment type="catalytic activity">
    <reaction>
        <text>S-ubiquitinyl-[E2 ubiquitin-conjugating enzyme]-L-cysteine + [acceptor protein]-L-lysine = [E2 ubiquitin-conjugating enzyme]-L-cysteine + N(6)-ubiquitinyl-[acceptor protein]-L-lysine.</text>
        <dbReference type="EC" id="2.3.2.27"/>
    </reaction>
</comment>
<comment type="pathway">
    <text evidence="1 2">Protein modification; protein ubiquitination.</text>
</comment>
<comment type="subcellular location">
    <subcellularLocation>
        <location evidence="1">Cytoplasm</location>
    </subcellularLocation>
    <subcellularLocation>
        <location evidence="1">Nucleus</location>
    </subcellularLocation>
</comment>
<comment type="domain">
    <text evidence="1 2">The U-box domain is required for the ubiquitin protein ligase activity.</text>
</comment>
<comment type="similarity">
    <text evidence="4">Belongs to the ubiquitin conjugation factor E4 family.</text>
</comment>
<comment type="sequence caution" evidence="4">
    <conflict type="miscellaneous discrepancy">
        <sequence resource="EMBL" id="BX832575"/>
    </conflict>
    <text>Sequencing errors.</text>
</comment>